<keyword id="KW-0150">Chloroplast</keyword>
<keyword id="KW-0275">Fatty acid biosynthesis</keyword>
<keyword id="KW-0276">Fatty acid metabolism</keyword>
<keyword id="KW-0378">Hydrolase</keyword>
<keyword id="KW-0444">Lipid biosynthesis</keyword>
<keyword id="KW-0443">Lipid metabolism</keyword>
<keyword id="KW-0934">Plastid</keyword>
<keyword id="KW-0809">Transit peptide</keyword>
<comment type="function">
    <text>Plays an essential role in chain termination during de novo fatty acid synthesis. High thioesterase activity for palmitoyl-ACP versus other acyl-ACPs.</text>
</comment>
<comment type="catalytic activity">
    <reaction>
        <text>hexadecanoyl-[ACP] + H2O = hexadecanoate + holo-[ACP] + H(+)</text>
        <dbReference type="Rhea" id="RHEA:41932"/>
        <dbReference type="Rhea" id="RHEA-COMP:9652"/>
        <dbReference type="Rhea" id="RHEA-COMP:9685"/>
        <dbReference type="ChEBI" id="CHEBI:7896"/>
        <dbReference type="ChEBI" id="CHEBI:15377"/>
        <dbReference type="ChEBI" id="CHEBI:15378"/>
        <dbReference type="ChEBI" id="CHEBI:64479"/>
        <dbReference type="ChEBI" id="CHEBI:78483"/>
    </reaction>
</comment>
<comment type="subcellular location">
    <subcellularLocation>
        <location>Plastid</location>
        <location>Chloroplast</location>
    </subcellularLocation>
</comment>
<comment type="similarity">
    <text evidence="3">Belongs to the acyl-ACP thioesterase family.</text>
</comment>
<organism>
    <name type="scientific">Cuphea hookeriana</name>
    <name type="common">Cigar plant</name>
    <dbReference type="NCBI Taxonomy" id="36775"/>
    <lineage>
        <taxon>Eukaryota</taxon>
        <taxon>Viridiplantae</taxon>
        <taxon>Streptophyta</taxon>
        <taxon>Embryophyta</taxon>
        <taxon>Tracheophyta</taxon>
        <taxon>Spermatophyta</taxon>
        <taxon>Magnoliopsida</taxon>
        <taxon>eudicotyledons</taxon>
        <taxon>Gunneridae</taxon>
        <taxon>Pentapetalae</taxon>
        <taxon>rosids</taxon>
        <taxon>malvids</taxon>
        <taxon>Myrtales</taxon>
        <taxon>Lythraceae</taxon>
        <taxon>Cuphea</taxon>
    </lineage>
</organism>
<dbReference type="EC" id="3.1.2.-"/>
<dbReference type="EMBL" id="U17076">
    <property type="protein sequence ID" value="AAC48990.1"/>
    <property type="molecule type" value="mRNA"/>
</dbReference>
<dbReference type="SMR" id="Q39513"/>
<dbReference type="GO" id="GO:0009507">
    <property type="term" value="C:chloroplast"/>
    <property type="evidence" value="ECO:0007669"/>
    <property type="project" value="UniProtKB-SubCell"/>
</dbReference>
<dbReference type="GO" id="GO:0000036">
    <property type="term" value="F:acyl carrier activity"/>
    <property type="evidence" value="ECO:0007669"/>
    <property type="project" value="TreeGrafter"/>
</dbReference>
<dbReference type="GO" id="GO:0016297">
    <property type="term" value="F:fatty acyl-[ACP] hydrolase activity"/>
    <property type="evidence" value="ECO:0007669"/>
    <property type="project" value="InterPro"/>
</dbReference>
<dbReference type="CDD" id="cd00586">
    <property type="entry name" value="4HBT"/>
    <property type="match status" value="1"/>
</dbReference>
<dbReference type="FunFam" id="3.10.129.10:FF:000014">
    <property type="entry name" value="Acyl-[acyl-carrier-protein] hydrolase"/>
    <property type="match status" value="1"/>
</dbReference>
<dbReference type="Gene3D" id="3.10.129.10">
    <property type="entry name" value="Hotdog Thioesterase"/>
    <property type="match status" value="1"/>
</dbReference>
<dbReference type="InterPro" id="IPR021113">
    <property type="entry name" value="Acyl-ACP-thioesterase_N"/>
</dbReference>
<dbReference type="InterPro" id="IPR049427">
    <property type="entry name" value="Acyl-ACP_TE_C"/>
</dbReference>
<dbReference type="InterPro" id="IPR002864">
    <property type="entry name" value="Acyl-ACP_thioesterase_NHD"/>
</dbReference>
<dbReference type="InterPro" id="IPR045023">
    <property type="entry name" value="FATA/B"/>
</dbReference>
<dbReference type="InterPro" id="IPR029069">
    <property type="entry name" value="HotDog_dom_sf"/>
</dbReference>
<dbReference type="PANTHER" id="PTHR31727">
    <property type="entry name" value="OLEOYL-ACYL CARRIER PROTEIN THIOESTERASE 1, CHLOROPLASTIC"/>
    <property type="match status" value="1"/>
</dbReference>
<dbReference type="PANTHER" id="PTHR31727:SF2">
    <property type="entry name" value="PALMITOYL-ACYL CARRIER PROTEIN THIOESTERASE, CHLOROPLASTIC"/>
    <property type="match status" value="1"/>
</dbReference>
<dbReference type="Pfam" id="PF01643">
    <property type="entry name" value="Acyl-ACP_TE"/>
    <property type="match status" value="1"/>
</dbReference>
<dbReference type="Pfam" id="PF20791">
    <property type="entry name" value="Acyl-ACP_TE_C"/>
    <property type="match status" value="1"/>
</dbReference>
<dbReference type="Pfam" id="PF12590">
    <property type="entry name" value="Acyl-thio_N"/>
    <property type="match status" value="1"/>
</dbReference>
<dbReference type="SUPFAM" id="SSF54637">
    <property type="entry name" value="Thioesterase/thiol ester dehydrase-isomerase"/>
    <property type="match status" value="2"/>
</dbReference>
<reference key="1">
    <citation type="journal article" date="1995" name="Plant Cell">
        <title>Palmitoyl-acyl carrier protein (ACP) thioesterase and the evolutionary origin of plant acyl-ACP thioesterases.</title>
        <authorList>
            <person name="Jones A."/>
            <person name="Davies H.M."/>
            <person name="Voelker T.A."/>
        </authorList>
    </citation>
    <scope>NUCLEOTIDE SEQUENCE [MRNA]</scope>
    <source>
        <tissue>Seed</tissue>
    </source>
</reference>
<evidence type="ECO:0000255" key="1"/>
<evidence type="ECO:0000256" key="2">
    <source>
        <dbReference type="SAM" id="MobiDB-lite"/>
    </source>
</evidence>
<evidence type="ECO:0000305" key="3"/>
<gene>
    <name type="primary">FATB1</name>
</gene>
<sequence>MVATAASSAFFPLPSADTSSRPGKLGNKPSSLSPLKPKSTPNGGLQVKANASAPPKINGSPVGLKSGGLKTQEDAHSAPPPRTFINQLPDWSMLLAAITTVFLAAEKQWMMLDWKPKRPDMLVDPFGLGSIVQDGLVFRQNFSIRSYEIGADRTASIETVMNHLQETALNHVKIAGLSNDGFGRTPEMYKRDLIWVVAKMQVMVNRYPTWGDTVEVNTWVAKSGKNGMRRDWLISDCNTGEILTRASSVWVMMNQKTRRLSKIPDEVRNEIEPHFVDSPPVIEDDDRKLPKLDEKTADSIRKGLTPRWNDLDVNQHVNNVKYIGWILESTPPEVLETQELCSLTLEYRRECGRESVLESLTAMDPSGGGYGSQFQHLLRLEDGGEIVKGRTEWRPKNGVINGVVPTGESSPGDYS</sequence>
<accession>Q39513</accession>
<proteinExistence type="evidence at transcript level"/>
<name>FATB_CUPHO</name>
<protein>
    <recommendedName>
        <fullName>Palmitoyl-acyl carrier protein thioesterase, chloroplastic</fullName>
        <ecNumber>3.1.2.-</ecNumber>
    </recommendedName>
    <alternativeName>
        <fullName>16:0-acyl-carrier protein thioesterase</fullName>
        <shortName>16:0-ACP thioesterase</shortName>
    </alternativeName>
    <alternativeName>
        <fullName>Acyl-[acyl-carrier-protein] hydrolase</fullName>
    </alternativeName>
    <alternativeName>
        <fullName>PATE</fullName>
    </alternativeName>
</protein>
<feature type="transit peptide" description="Chloroplast" evidence="1">
    <location>
        <begin position="1"/>
        <end position="60"/>
    </location>
</feature>
<feature type="chain" id="PRO_0000000593" description="Palmitoyl-acyl carrier protein thioesterase, chloroplastic">
    <location>
        <begin position="61"/>
        <end position="415"/>
    </location>
</feature>
<feature type="region of interest" description="Disordered" evidence="2">
    <location>
        <begin position="1"/>
        <end position="81"/>
    </location>
</feature>
<feature type="compositionally biased region" description="Low complexity" evidence="2">
    <location>
        <begin position="1"/>
        <end position="16"/>
    </location>
</feature>
<feature type="compositionally biased region" description="Low complexity" evidence="2">
    <location>
        <begin position="24"/>
        <end position="41"/>
    </location>
</feature>
<feature type="active site" evidence="1">
    <location>
        <position position="314"/>
    </location>
</feature>
<feature type="active site" evidence="1">
    <location>
        <position position="316"/>
    </location>
</feature>
<feature type="active site" evidence="1">
    <location>
        <position position="351"/>
    </location>
</feature>